<name>EDL11_ARATH</name>
<accession>Q94AF9</accession>
<accession>Q9MAA3</accession>
<keyword id="KW-0025">Alternative splicing</keyword>
<keyword id="KW-0472">Membrane</keyword>
<keyword id="KW-1185">Reference proteome</keyword>
<keyword id="KW-0762">Sugar transport</keyword>
<keyword id="KW-0812">Transmembrane</keyword>
<keyword id="KW-1133">Transmembrane helix</keyword>
<keyword id="KW-0813">Transport</keyword>
<proteinExistence type="evidence at transcript level"/>
<protein>
    <recommendedName>
        <fullName>Sugar transporter ERD6-like 11</fullName>
    </recommendedName>
</protein>
<reference key="1">
    <citation type="journal article" date="2000" name="Nature">
        <title>Sequence and analysis of chromosome 3 of the plant Arabidopsis thaliana.</title>
        <authorList>
            <person name="Salanoubat M."/>
            <person name="Lemcke K."/>
            <person name="Rieger M."/>
            <person name="Ansorge W."/>
            <person name="Unseld M."/>
            <person name="Fartmann B."/>
            <person name="Valle G."/>
            <person name="Bloecker H."/>
            <person name="Perez-Alonso M."/>
            <person name="Obermaier B."/>
            <person name="Delseny M."/>
            <person name="Boutry M."/>
            <person name="Grivell L.A."/>
            <person name="Mache R."/>
            <person name="Puigdomenech P."/>
            <person name="De Simone V."/>
            <person name="Choisne N."/>
            <person name="Artiguenave F."/>
            <person name="Robert C."/>
            <person name="Brottier P."/>
            <person name="Wincker P."/>
            <person name="Cattolico L."/>
            <person name="Weissenbach J."/>
            <person name="Saurin W."/>
            <person name="Quetier F."/>
            <person name="Schaefer M."/>
            <person name="Mueller-Auer S."/>
            <person name="Gabel C."/>
            <person name="Fuchs M."/>
            <person name="Benes V."/>
            <person name="Wurmbach E."/>
            <person name="Drzonek H."/>
            <person name="Erfle H."/>
            <person name="Jordan N."/>
            <person name="Bangert S."/>
            <person name="Wiedelmann R."/>
            <person name="Kranz H."/>
            <person name="Voss H."/>
            <person name="Holland R."/>
            <person name="Brandt P."/>
            <person name="Nyakatura G."/>
            <person name="Vezzi A."/>
            <person name="D'Angelo M."/>
            <person name="Pallavicini A."/>
            <person name="Toppo S."/>
            <person name="Simionati B."/>
            <person name="Conrad A."/>
            <person name="Hornischer K."/>
            <person name="Kauer G."/>
            <person name="Loehnert T.-H."/>
            <person name="Nordsiek G."/>
            <person name="Reichelt J."/>
            <person name="Scharfe M."/>
            <person name="Schoen O."/>
            <person name="Bargues M."/>
            <person name="Terol J."/>
            <person name="Climent J."/>
            <person name="Navarro P."/>
            <person name="Collado C."/>
            <person name="Perez-Perez A."/>
            <person name="Ottenwaelder B."/>
            <person name="Duchemin D."/>
            <person name="Cooke R."/>
            <person name="Laudie M."/>
            <person name="Berger-Llauro C."/>
            <person name="Purnelle B."/>
            <person name="Masuy D."/>
            <person name="de Haan M."/>
            <person name="Maarse A.C."/>
            <person name="Alcaraz J.-P."/>
            <person name="Cottet A."/>
            <person name="Casacuberta E."/>
            <person name="Monfort A."/>
            <person name="Argiriou A."/>
            <person name="Flores M."/>
            <person name="Liguori R."/>
            <person name="Vitale D."/>
            <person name="Mannhaupt G."/>
            <person name="Haase D."/>
            <person name="Schoof H."/>
            <person name="Rudd S."/>
            <person name="Zaccaria P."/>
            <person name="Mewes H.-W."/>
            <person name="Mayer K.F.X."/>
            <person name="Kaul S."/>
            <person name="Town C.D."/>
            <person name="Koo H.L."/>
            <person name="Tallon L.J."/>
            <person name="Jenkins J."/>
            <person name="Rooney T."/>
            <person name="Rizzo M."/>
            <person name="Walts A."/>
            <person name="Utterback T."/>
            <person name="Fujii C.Y."/>
            <person name="Shea T.P."/>
            <person name="Creasy T.H."/>
            <person name="Haas B."/>
            <person name="Maiti R."/>
            <person name="Wu D."/>
            <person name="Peterson J."/>
            <person name="Van Aken S."/>
            <person name="Pai G."/>
            <person name="Militscher J."/>
            <person name="Sellers P."/>
            <person name="Gill J.E."/>
            <person name="Feldblyum T.V."/>
            <person name="Preuss D."/>
            <person name="Lin X."/>
            <person name="Nierman W.C."/>
            <person name="Salzberg S.L."/>
            <person name="White O."/>
            <person name="Venter J.C."/>
            <person name="Fraser C.M."/>
            <person name="Kaneko T."/>
            <person name="Nakamura Y."/>
            <person name="Sato S."/>
            <person name="Kato T."/>
            <person name="Asamizu E."/>
            <person name="Sasamoto S."/>
            <person name="Kimura T."/>
            <person name="Idesawa K."/>
            <person name="Kawashima K."/>
            <person name="Kishida Y."/>
            <person name="Kiyokawa C."/>
            <person name="Kohara M."/>
            <person name="Matsumoto M."/>
            <person name="Matsuno A."/>
            <person name="Muraki A."/>
            <person name="Nakayama S."/>
            <person name="Nakazaki N."/>
            <person name="Shinpo S."/>
            <person name="Takeuchi C."/>
            <person name="Wada T."/>
            <person name="Watanabe A."/>
            <person name="Yamada M."/>
            <person name="Yasuda M."/>
            <person name="Tabata S."/>
        </authorList>
    </citation>
    <scope>NUCLEOTIDE SEQUENCE [LARGE SCALE GENOMIC DNA]</scope>
    <source>
        <strain>cv. Columbia</strain>
    </source>
</reference>
<reference key="2">
    <citation type="journal article" date="2017" name="Plant J.">
        <title>Araport11: a complete reannotation of the Arabidopsis thaliana reference genome.</title>
        <authorList>
            <person name="Cheng C.Y."/>
            <person name="Krishnakumar V."/>
            <person name="Chan A.P."/>
            <person name="Thibaud-Nissen F."/>
            <person name="Schobel S."/>
            <person name="Town C.D."/>
        </authorList>
    </citation>
    <scope>GENOME REANNOTATION</scope>
    <source>
        <strain>cv. Columbia</strain>
    </source>
</reference>
<reference key="3">
    <citation type="journal article" date="2003" name="Science">
        <title>Empirical analysis of transcriptional activity in the Arabidopsis genome.</title>
        <authorList>
            <person name="Yamada K."/>
            <person name="Lim J."/>
            <person name="Dale J.M."/>
            <person name="Chen H."/>
            <person name="Shinn P."/>
            <person name="Palm C.J."/>
            <person name="Southwick A.M."/>
            <person name="Wu H.C."/>
            <person name="Kim C.J."/>
            <person name="Nguyen M."/>
            <person name="Pham P.K."/>
            <person name="Cheuk R.F."/>
            <person name="Karlin-Newmann G."/>
            <person name="Liu S.X."/>
            <person name="Lam B."/>
            <person name="Sakano H."/>
            <person name="Wu T."/>
            <person name="Yu G."/>
            <person name="Miranda M."/>
            <person name="Quach H.L."/>
            <person name="Tripp M."/>
            <person name="Chang C.H."/>
            <person name="Lee J.M."/>
            <person name="Toriumi M.J."/>
            <person name="Chan M.M."/>
            <person name="Tang C.C."/>
            <person name="Onodera C.S."/>
            <person name="Deng J.M."/>
            <person name="Akiyama K."/>
            <person name="Ansari Y."/>
            <person name="Arakawa T."/>
            <person name="Banh J."/>
            <person name="Banno F."/>
            <person name="Bowser L."/>
            <person name="Brooks S.Y."/>
            <person name="Carninci P."/>
            <person name="Chao Q."/>
            <person name="Choy N."/>
            <person name="Enju A."/>
            <person name="Goldsmith A.D."/>
            <person name="Gurjal M."/>
            <person name="Hansen N.F."/>
            <person name="Hayashizaki Y."/>
            <person name="Johnson-Hopson C."/>
            <person name="Hsuan V.W."/>
            <person name="Iida K."/>
            <person name="Karnes M."/>
            <person name="Khan S."/>
            <person name="Koesema E."/>
            <person name="Ishida J."/>
            <person name="Jiang P.X."/>
            <person name="Jones T."/>
            <person name="Kawai J."/>
            <person name="Kamiya A."/>
            <person name="Meyers C."/>
            <person name="Nakajima M."/>
            <person name="Narusaka M."/>
            <person name="Seki M."/>
            <person name="Sakurai T."/>
            <person name="Satou M."/>
            <person name="Tamse R."/>
            <person name="Vaysberg M."/>
            <person name="Wallender E.K."/>
            <person name="Wong C."/>
            <person name="Yamamura Y."/>
            <person name="Yuan S."/>
            <person name="Shinozaki K."/>
            <person name="Davis R.W."/>
            <person name="Theologis A."/>
            <person name="Ecker J.R."/>
        </authorList>
    </citation>
    <scope>NUCLEOTIDE SEQUENCE [LARGE SCALE MRNA] (ISOFORM 2)</scope>
    <source>
        <strain>cv. Columbia</strain>
    </source>
</reference>
<reference key="4">
    <citation type="journal article" date="2006" name="BMC Evol. Biol.">
        <title>The monosaccharide transporter gene family in land plants is ancient and shows differential subfamily expression and expansion across lineages.</title>
        <authorList>
            <person name="Johnson D.A."/>
            <person name="Hill J.P."/>
            <person name="Thomas M.A."/>
        </authorList>
    </citation>
    <scope>GENE FAMILY</scope>
</reference>
<dbReference type="EMBL" id="AC009177">
    <property type="protein sequence ID" value="AAF27022.1"/>
    <property type="status" value="ALT_SEQ"/>
    <property type="molecule type" value="Genomic_DNA"/>
</dbReference>
<dbReference type="EMBL" id="CP002686">
    <property type="protein sequence ID" value="AEE74195.1"/>
    <property type="molecule type" value="Genomic_DNA"/>
</dbReference>
<dbReference type="EMBL" id="CP002686">
    <property type="protein sequence ID" value="AEE74196.1"/>
    <property type="molecule type" value="Genomic_DNA"/>
</dbReference>
<dbReference type="EMBL" id="CP002686">
    <property type="protein sequence ID" value="AEE74197.1"/>
    <property type="molecule type" value="Genomic_DNA"/>
</dbReference>
<dbReference type="EMBL" id="AY048207">
    <property type="protein sequence ID" value="AAK82470.1"/>
    <property type="molecule type" value="mRNA"/>
</dbReference>
<dbReference type="EMBL" id="AY077661">
    <property type="protein sequence ID" value="AAL76139.1"/>
    <property type="molecule type" value="mRNA"/>
</dbReference>
<dbReference type="RefSeq" id="NP_001030640.1">
    <molecule id="Q94AF9-1"/>
    <property type="nucleotide sequence ID" value="NM_001035563.2"/>
</dbReference>
<dbReference type="RefSeq" id="NP_566248.1">
    <molecule id="Q94AF9-1"/>
    <property type="nucleotide sequence ID" value="NM_111389.2"/>
</dbReference>
<dbReference type="RefSeq" id="NP_974225.1">
    <molecule id="Q94AF9-1"/>
    <property type="nucleotide sequence ID" value="NM_202496.2"/>
</dbReference>
<dbReference type="SMR" id="Q94AF9"/>
<dbReference type="BioGRID" id="5015">
    <property type="interactions" value="1"/>
</dbReference>
<dbReference type="FunCoup" id="Q94AF9">
    <property type="interactions" value="673"/>
</dbReference>
<dbReference type="IntAct" id="Q94AF9">
    <property type="interactions" value="1"/>
</dbReference>
<dbReference type="STRING" id="3702.Q94AF9"/>
<dbReference type="PaxDb" id="3702-AT3G05165.2"/>
<dbReference type="ProteomicsDB" id="247063">
    <molecule id="Q94AF9-1"/>
</dbReference>
<dbReference type="EnsemblPlants" id="AT3G05165.1">
    <molecule id="Q94AF9-1"/>
    <property type="protein sequence ID" value="AT3G05165.1"/>
    <property type="gene ID" value="AT3G05165"/>
</dbReference>
<dbReference type="EnsemblPlants" id="AT3G05165.2">
    <molecule id="Q94AF9-1"/>
    <property type="protein sequence ID" value="AT3G05165.2"/>
    <property type="gene ID" value="AT3G05165"/>
</dbReference>
<dbReference type="EnsemblPlants" id="AT3G05165.3">
    <molecule id="Q94AF9-1"/>
    <property type="protein sequence ID" value="AT3G05165.3"/>
    <property type="gene ID" value="AT3G05165"/>
</dbReference>
<dbReference type="GeneID" id="819680"/>
<dbReference type="Gramene" id="AT3G05165.1">
    <molecule id="Q94AF9-1"/>
    <property type="protein sequence ID" value="AT3G05165.1"/>
    <property type="gene ID" value="AT3G05165"/>
</dbReference>
<dbReference type="Gramene" id="AT3G05165.2">
    <molecule id="Q94AF9-1"/>
    <property type="protein sequence ID" value="AT3G05165.2"/>
    <property type="gene ID" value="AT3G05165"/>
</dbReference>
<dbReference type="Gramene" id="AT3G05165.3">
    <molecule id="Q94AF9-1"/>
    <property type="protein sequence ID" value="AT3G05165.3"/>
    <property type="gene ID" value="AT3G05165"/>
</dbReference>
<dbReference type="KEGG" id="ath:AT3G05165"/>
<dbReference type="Araport" id="AT3G05165"/>
<dbReference type="TAIR" id="AT3G05165"/>
<dbReference type="eggNOG" id="KOG0254">
    <property type="taxonomic scope" value="Eukaryota"/>
</dbReference>
<dbReference type="HOGENOM" id="CLU_001265_30_5_1"/>
<dbReference type="InParanoid" id="Q94AF9"/>
<dbReference type="OMA" id="VFFMYPE"/>
<dbReference type="PhylomeDB" id="Q94AF9"/>
<dbReference type="PRO" id="PR:Q94AF9"/>
<dbReference type="Proteomes" id="UP000006548">
    <property type="component" value="Chromosome 3"/>
</dbReference>
<dbReference type="ExpressionAtlas" id="Q94AF9">
    <property type="expression patterns" value="baseline and differential"/>
</dbReference>
<dbReference type="GO" id="GO:0016020">
    <property type="term" value="C:membrane"/>
    <property type="evidence" value="ECO:0007669"/>
    <property type="project" value="UniProtKB-SubCell"/>
</dbReference>
<dbReference type="GO" id="GO:0051119">
    <property type="term" value="F:sugar transmembrane transporter activity"/>
    <property type="evidence" value="ECO:0007669"/>
    <property type="project" value="InterPro"/>
</dbReference>
<dbReference type="CDD" id="cd17358">
    <property type="entry name" value="MFS_GLUT6_8_Class3_like"/>
    <property type="match status" value="1"/>
</dbReference>
<dbReference type="FunFam" id="1.20.1250.20:FF:000043">
    <property type="entry name" value="sugar transporter ERD6-like 6"/>
    <property type="match status" value="1"/>
</dbReference>
<dbReference type="Gene3D" id="1.20.1250.20">
    <property type="entry name" value="MFS general substrate transporter like domains"/>
    <property type="match status" value="1"/>
</dbReference>
<dbReference type="InterPro" id="IPR020846">
    <property type="entry name" value="MFS_dom"/>
</dbReference>
<dbReference type="InterPro" id="IPR044775">
    <property type="entry name" value="MFS_ERD6/Tret1-like"/>
</dbReference>
<dbReference type="InterPro" id="IPR005828">
    <property type="entry name" value="MFS_sugar_transport-like"/>
</dbReference>
<dbReference type="InterPro" id="IPR036259">
    <property type="entry name" value="MFS_trans_sf"/>
</dbReference>
<dbReference type="InterPro" id="IPR050549">
    <property type="entry name" value="MFS_Trehalose_Transporter"/>
</dbReference>
<dbReference type="InterPro" id="IPR003663">
    <property type="entry name" value="Sugar/inositol_transpt"/>
</dbReference>
<dbReference type="InterPro" id="IPR005829">
    <property type="entry name" value="Sugar_transporter_CS"/>
</dbReference>
<dbReference type="NCBIfam" id="TIGR00879">
    <property type="entry name" value="SP"/>
    <property type="match status" value="1"/>
</dbReference>
<dbReference type="PANTHER" id="PTHR48021">
    <property type="match status" value="1"/>
</dbReference>
<dbReference type="PANTHER" id="PTHR48021:SF50">
    <property type="entry name" value="SUGAR TRANSPORTER ERD6-LIKE 10-RELATED"/>
    <property type="match status" value="1"/>
</dbReference>
<dbReference type="Pfam" id="PF00083">
    <property type="entry name" value="Sugar_tr"/>
    <property type="match status" value="1"/>
</dbReference>
<dbReference type="PRINTS" id="PR00171">
    <property type="entry name" value="SUGRTRNSPORT"/>
</dbReference>
<dbReference type="SUPFAM" id="SSF103473">
    <property type="entry name" value="MFS general substrate transporter"/>
    <property type="match status" value="1"/>
</dbReference>
<dbReference type="PROSITE" id="PS50850">
    <property type="entry name" value="MFS"/>
    <property type="match status" value="1"/>
</dbReference>
<dbReference type="PROSITE" id="PS00216">
    <property type="entry name" value="SUGAR_TRANSPORT_1"/>
    <property type="match status" value="1"/>
</dbReference>
<sequence>MVVEEENRSMEEGLLQHQNDRDDRRITACVILSTFVAVCSAFSYGCAAGYTSGAETAIMKELDLSMAQFSAFGSFLNVGGAVGALFSGQLAVILGRRRTLWACDFFCVFGWLSIAFAKNVFWLDLGRISLGIGVGLISYVVPVYIAEITPKHVRGAFTASNQLLQNSGVSLIYFFGTVINWRVMAVIGAIPCILQTIGIFFIPESPRWLAKIRLSKEVESSLHRLRGKDTDVSGEAAEIQVMTKMLEEDSKSSFSDMFQKKYRRTLVVGIGLMLIQQLSGASGITYYSNAIFRKAGFSERLGSMIFGVFVIPKALVGLILVDRWGRRPLLLASAVGMSIGSLLIGVSFTLQQMNVLPELIPIFVFVNILVYFGCFAFGIGGLPWVIMSEIFPINIKVSAGTIVALTSWTSGWFVSYAFNFMFEWSAQGTFYIFAAVGGMSFIFIWMLVPETKGQSLEELQASLTGTS</sequence>
<comment type="function">
    <text evidence="4">Sugar transporter.</text>
</comment>
<comment type="subcellular location">
    <subcellularLocation>
        <location evidence="1">Membrane</location>
        <topology evidence="1">Multi-pass membrane protein</topology>
    </subcellularLocation>
</comment>
<comment type="alternative products">
    <event type="alternative splicing"/>
    <isoform>
        <id>Q94AF9-1</id>
        <name>1</name>
        <sequence type="displayed"/>
    </isoform>
    <isoform>
        <id>Q94AF9-2</id>
        <name>2</name>
        <sequence type="described" ref="VSP_021551"/>
    </isoform>
</comment>
<comment type="similarity">
    <text evidence="4">Belongs to the major facilitator superfamily. Sugar transporter (TC 2.A.1.1) family.</text>
</comment>
<comment type="sequence caution" evidence="4">
    <conflict type="erroneous gene model prediction">
        <sequence resource="EMBL-CDS" id="AAF27022"/>
    </conflict>
    <text>The predicted gene At3g05160 has been split into 2 genes: At3g05160 and At3g05165.</text>
</comment>
<gene>
    <name type="ordered locus">At3g05165</name>
    <name type="ORF">T12H1.13</name>
</gene>
<evidence type="ECO:0000250" key="1"/>
<evidence type="ECO:0000255" key="2"/>
<evidence type="ECO:0000303" key="3">
    <source>
    </source>
</evidence>
<evidence type="ECO:0000305" key="4"/>
<organism>
    <name type="scientific">Arabidopsis thaliana</name>
    <name type="common">Mouse-ear cress</name>
    <dbReference type="NCBI Taxonomy" id="3702"/>
    <lineage>
        <taxon>Eukaryota</taxon>
        <taxon>Viridiplantae</taxon>
        <taxon>Streptophyta</taxon>
        <taxon>Embryophyta</taxon>
        <taxon>Tracheophyta</taxon>
        <taxon>Spermatophyta</taxon>
        <taxon>Magnoliopsida</taxon>
        <taxon>eudicotyledons</taxon>
        <taxon>Gunneridae</taxon>
        <taxon>Pentapetalae</taxon>
        <taxon>rosids</taxon>
        <taxon>malvids</taxon>
        <taxon>Brassicales</taxon>
        <taxon>Brassicaceae</taxon>
        <taxon>Camelineae</taxon>
        <taxon>Arabidopsis</taxon>
    </lineage>
</organism>
<feature type="chain" id="PRO_0000259861" description="Sugar transporter ERD6-like 11">
    <location>
        <begin position="1"/>
        <end position="467"/>
    </location>
</feature>
<feature type="transmembrane region" description="Helical; Name=1" evidence="2">
    <location>
        <begin position="26"/>
        <end position="46"/>
    </location>
</feature>
<feature type="transmembrane region" description="Helical; Name=2" evidence="2">
    <location>
        <begin position="75"/>
        <end position="95"/>
    </location>
</feature>
<feature type="transmembrane region" description="Helical; Name=3" evidence="2">
    <location>
        <begin position="105"/>
        <end position="125"/>
    </location>
</feature>
<feature type="transmembrane region" description="Helical; Name=4" evidence="2">
    <location>
        <begin position="128"/>
        <end position="148"/>
    </location>
</feature>
<feature type="transmembrane region" description="Helical; Name=5" evidence="2">
    <location>
        <begin position="155"/>
        <end position="177"/>
    </location>
</feature>
<feature type="transmembrane region" description="Helical; Name=6" evidence="2">
    <location>
        <begin position="183"/>
        <end position="203"/>
    </location>
</feature>
<feature type="transmembrane region" description="Helical; Name=7" evidence="2">
    <location>
        <begin position="266"/>
        <end position="286"/>
    </location>
</feature>
<feature type="transmembrane region" description="Helical; Name=8" evidence="2">
    <location>
        <begin position="301"/>
        <end position="321"/>
    </location>
</feature>
<feature type="transmembrane region" description="Helical; Name=9" evidence="2">
    <location>
        <begin position="328"/>
        <end position="348"/>
    </location>
</feature>
<feature type="transmembrane region" description="Helical; Name=10" evidence="2">
    <location>
        <begin position="359"/>
        <end position="379"/>
    </location>
</feature>
<feature type="transmembrane region" description="Helical; Name=11" evidence="2">
    <location>
        <begin position="402"/>
        <end position="422"/>
    </location>
</feature>
<feature type="transmembrane region" description="Helical; Name=12" evidence="2">
    <location>
        <begin position="428"/>
        <end position="448"/>
    </location>
</feature>
<feature type="splice variant" id="VSP_021551" description="In isoform 2." evidence="3">
    <location>
        <begin position="1"/>
        <end position="183"/>
    </location>
</feature>